<protein>
    <recommendedName>
        <fullName evidence="1">Type III pantothenate kinase</fullName>
        <ecNumber evidence="1">2.7.1.33</ecNumber>
    </recommendedName>
    <alternativeName>
        <fullName evidence="1">PanK-III</fullName>
    </alternativeName>
    <alternativeName>
        <fullName evidence="1">Pantothenic acid kinase</fullName>
    </alternativeName>
</protein>
<feature type="chain" id="PRO_0000267518" description="Type III pantothenate kinase">
    <location>
        <begin position="1"/>
        <end position="263"/>
    </location>
</feature>
<feature type="active site" description="Proton acceptor" evidence="1">
    <location>
        <position position="117"/>
    </location>
</feature>
<feature type="binding site" evidence="1">
    <location>
        <begin position="14"/>
        <end position="21"/>
    </location>
    <ligand>
        <name>ATP</name>
        <dbReference type="ChEBI" id="CHEBI:30616"/>
    </ligand>
</feature>
<feature type="binding site" evidence="1">
    <location>
        <begin position="115"/>
        <end position="118"/>
    </location>
    <ligand>
        <name>substrate</name>
    </ligand>
</feature>
<feature type="binding site" evidence="1">
    <location>
        <position position="137"/>
    </location>
    <ligand>
        <name>K(+)</name>
        <dbReference type="ChEBI" id="CHEBI:29103"/>
    </ligand>
</feature>
<feature type="binding site" evidence="1">
    <location>
        <position position="140"/>
    </location>
    <ligand>
        <name>ATP</name>
        <dbReference type="ChEBI" id="CHEBI:30616"/>
    </ligand>
</feature>
<feature type="binding site" evidence="1">
    <location>
        <position position="192"/>
    </location>
    <ligand>
        <name>substrate</name>
    </ligand>
</feature>
<organism>
    <name type="scientific">Dehalococcoides mccartyi (strain CBDB1)</name>
    <dbReference type="NCBI Taxonomy" id="255470"/>
    <lineage>
        <taxon>Bacteria</taxon>
        <taxon>Bacillati</taxon>
        <taxon>Chloroflexota</taxon>
        <taxon>Dehalococcoidia</taxon>
        <taxon>Dehalococcoidales</taxon>
        <taxon>Dehalococcoidaceae</taxon>
        <taxon>Dehalococcoides</taxon>
    </lineage>
</organism>
<dbReference type="EC" id="2.7.1.33" evidence="1"/>
<dbReference type="EMBL" id="AJ965256">
    <property type="protein sequence ID" value="CAI82593.1"/>
    <property type="molecule type" value="Genomic_DNA"/>
</dbReference>
<dbReference type="RefSeq" id="WP_011308950.1">
    <property type="nucleotide sequence ID" value="NC_007356.1"/>
</dbReference>
<dbReference type="SMR" id="Q3ZZH1"/>
<dbReference type="KEGG" id="deh:cbdbA381"/>
<dbReference type="HOGENOM" id="CLU_066627_1_0_0"/>
<dbReference type="UniPathway" id="UPA00241">
    <property type="reaction ID" value="UER00352"/>
</dbReference>
<dbReference type="Proteomes" id="UP000000433">
    <property type="component" value="Chromosome"/>
</dbReference>
<dbReference type="GO" id="GO:0005737">
    <property type="term" value="C:cytoplasm"/>
    <property type="evidence" value="ECO:0007669"/>
    <property type="project" value="UniProtKB-SubCell"/>
</dbReference>
<dbReference type="GO" id="GO:0005524">
    <property type="term" value="F:ATP binding"/>
    <property type="evidence" value="ECO:0007669"/>
    <property type="project" value="UniProtKB-UniRule"/>
</dbReference>
<dbReference type="GO" id="GO:0046872">
    <property type="term" value="F:metal ion binding"/>
    <property type="evidence" value="ECO:0007669"/>
    <property type="project" value="UniProtKB-KW"/>
</dbReference>
<dbReference type="GO" id="GO:0004594">
    <property type="term" value="F:pantothenate kinase activity"/>
    <property type="evidence" value="ECO:0007669"/>
    <property type="project" value="UniProtKB-UniRule"/>
</dbReference>
<dbReference type="GO" id="GO:0015937">
    <property type="term" value="P:coenzyme A biosynthetic process"/>
    <property type="evidence" value="ECO:0007669"/>
    <property type="project" value="UniProtKB-UniRule"/>
</dbReference>
<dbReference type="CDD" id="cd24015">
    <property type="entry name" value="ASKHA_NBD_PanK-III"/>
    <property type="match status" value="1"/>
</dbReference>
<dbReference type="Gene3D" id="3.30.420.40">
    <property type="match status" value="2"/>
</dbReference>
<dbReference type="HAMAP" id="MF_01274">
    <property type="entry name" value="Pantothen_kinase_3"/>
    <property type="match status" value="1"/>
</dbReference>
<dbReference type="InterPro" id="IPR043129">
    <property type="entry name" value="ATPase_NBD"/>
</dbReference>
<dbReference type="InterPro" id="IPR004619">
    <property type="entry name" value="Type_III_PanK"/>
</dbReference>
<dbReference type="NCBIfam" id="TIGR00671">
    <property type="entry name" value="baf"/>
    <property type="match status" value="1"/>
</dbReference>
<dbReference type="NCBIfam" id="NF009848">
    <property type="entry name" value="PRK13318.1-6"/>
    <property type="match status" value="1"/>
</dbReference>
<dbReference type="NCBIfam" id="NF009855">
    <property type="entry name" value="PRK13321.1"/>
    <property type="match status" value="1"/>
</dbReference>
<dbReference type="PANTHER" id="PTHR34265">
    <property type="entry name" value="TYPE III PANTOTHENATE KINASE"/>
    <property type="match status" value="1"/>
</dbReference>
<dbReference type="PANTHER" id="PTHR34265:SF1">
    <property type="entry name" value="TYPE III PANTOTHENATE KINASE"/>
    <property type="match status" value="1"/>
</dbReference>
<dbReference type="Pfam" id="PF03309">
    <property type="entry name" value="Pan_kinase"/>
    <property type="match status" value="1"/>
</dbReference>
<dbReference type="SUPFAM" id="SSF53067">
    <property type="entry name" value="Actin-like ATPase domain"/>
    <property type="match status" value="2"/>
</dbReference>
<evidence type="ECO:0000255" key="1">
    <source>
        <dbReference type="HAMAP-Rule" id="MF_01274"/>
    </source>
</evidence>
<proteinExistence type="inferred from homology"/>
<sequence>MNKQAATEKLVAVDIGNTSVNIGIFEGEQLLANWHLGSVAQRMADEYASLLLGLLQHADIQAGELNRVIMCSVVPPLTTTFEEVFKTYFKATPLVVGAGIKSGVKIRMDNPREVGADRIVNAAAARVLYPGACIIVDMGTATTFDTLSESGEYIGGAIAPGIATSAQAIVEKTSKLPKIEIIHPAKAIGSNTVSAMQSGVYFGYIGLVEELVRRIQAELGQKARVVATGGYASLIAEGSRIFDIVRPDLTLQGLRFIYQMNKV</sequence>
<accession>Q3ZZH1</accession>
<comment type="function">
    <text evidence="1">Catalyzes the phosphorylation of pantothenate (Pan), the first step in CoA biosynthesis.</text>
</comment>
<comment type="catalytic activity">
    <reaction evidence="1">
        <text>(R)-pantothenate + ATP = (R)-4'-phosphopantothenate + ADP + H(+)</text>
        <dbReference type="Rhea" id="RHEA:16373"/>
        <dbReference type="ChEBI" id="CHEBI:10986"/>
        <dbReference type="ChEBI" id="CHEBI:15378"/>
        <dbReference type="ChEBI" id="CHEBI:29032"/>
        <dbReference type="ChEBI" id="CHEBI:30616"/>
        <dbReference type="ChEBI" id="CHEBI:456216"/>
        <dbReference type="EC" id="2.7.1.33"/>
    </reaction>
</comment>
<comment type="cofactor">
    <cofactor evidence="1">
        <name>NH4(+)</name>
        <dbReference type="ChEBI" id="CHEBI:28938"/>
    </cofactor>
    <cofactor evidence="1">
        <name>K(+)</name>
        <dbReference type="ChEBI" id="CHEBI:29103"/>
    </cofactor>
    <text evidence="1">A monovalent cation. Ammonium or potassium.</text>
</comment>
<comment type="pathway">
    <text evidence="1">Cofactor biosynthesis; coenzyme A biosynthesis; CoA from (R)-pantothenate: step 1/5.</text>
</comment>
<comment type="subunit">
    <text evidence="1">Homodimer.</text>
</comment>
<comment type="subcellular location">
    <subcellularLocation>
        <location evidence="1">Cytoplasm</location>
    </subcellularLocation>
</comment>
<comment type="similarity">
    <text evidence="1">Belongs to the type III pantothenate kinase family.</text>
</comment>
<reference key="1">
    <citation type="journal article" date="2005" name="Nat. Biotechnol.">
        <title>Genome sequence of the chlorinated compound-respiring bacterium Dehalococcoides species strain CBDB1.</title>
        <authorList>
            <person name="Kube M."/>
            <person name="Beck A."/>
            <person name="Zinder S.H."/>
            <person name="Kuhl H."/>
            <person name="Reinhardt R."/>
            <person name="Adrian L."/>
        </authorList>
    </citation>
    <scope>NUCLEOTIDE SEQUENCE [LARGE SCALE GENOMIC DNA]</scope>
    <source>
        <strain>CBDB1</strain>
    </source>
</reference>
<gene>
    <name evidence="1" type="primary">coaX</name>
    <name type="ordered locus">cbdbA381</name>
</gene>
<name>COAX_DEHMC</name>
<keyword id="KW-0067">ATP-binding</keyword>
<keyword id="KW-0173">Coenzyme A biosynthesis</keyword>
<keyword id="KW-0963">Cytoplasm</keyword>
<keyword id="KW-0418">Kinase</keyword>
<keyword id="KW-0479">Metal-binding</keyword>
<keyword id="KW-0547">Nucleotide-binding</keyword>
<keyword id="KW-0630">Potassium</keyword>
<keyword id="KW-0808">Transferase</keyword>